<proteinExistence type="inferred from homology"/>
<sequence>MSSLSVYHVSSPDLPNKVLTHFDDIAATLAEQGIRFDRWPATTRVAPGTSQQEVICAYQEQVDRLMTEGGYASVDVISLDEDHPRKAELRASFLDEHRHSEDEVRFFVAGRGLFNLHIDDYVYAVLCERNDLISVPAGTAHWFDMGERPNLVAIRMFNNPQGWNASLTGDAIASQFPRLDD</sequence>
<accession>Q4K8J5</accession>
<gene>
    <name evidence="1" type="primary">mtnD</name>
    <name type="ordered locus">PFL_4346</name>
</gene>
<evidence type="ECO:0000255" key="1">
    <source>
        <dbReference type="HAMAP-Rule" id="MF_01682"/>
    </source>
</evidence>
<feature type="chain" id="PRO_0000359220" description="Acireductone dioxygenase">
    <location>
        <begin position="1"/>
        <end position="181"/>
    </location>
</feature>
<feature type="binding site" evidence="1">
    <location>
        <position position="97"/>
    </location>
    <ligand>
        <name>Fe(2+)</name>
        <dbReference type="ChEBI" id="CHEBI:29033"/>
    </ligand>
</feature>
<feature type="binding site" evidence="1">
    <location>
        <position position="97"/>
    </location>
    <ligand>
        <name>Ni(2+)</name>
        <dbReference type="ChEBI" id="CHEBI:49786"/>
    </ligand>
</feature>
<feature type="binding site" evidence="1">
    <location>
        <position position="99"/>
    </location>
    <ligand>
        <name>Fe(2+)</name>
        <dbReference type="ChEBI" id="CHEBI:29033"/>
    </ligand>
</feature>
<feature type="binding site" evidence="1">
    <location>
        <position position="99"/>
    </location>
    <ligand>
        <name>Ni(2+)</name>
        <dbReference type="ChEBI" id="CHEBI:49786"/>
    </ligand>
</feature>
<feature type="binding site" evidence="1">
    <location>
        <position position="103"/>
    </location>
    <ligand>
        <name>Fe(2+)</name>
        <dbReference type="ChEBI" id="CHEBI:29033"/>
    </ligand>
</feature>
<feature type="binding site" evidence="1">
    <location>
        <position position="103"/>
    </location>
    <ligand>
        <name>Ni(2+)</name>
        <dbReference type="ChEBI" id="CHEBI:49786"/>
    </ligand>
</feature>
<feature type="binding site" evidence="1">
    <location>
        <position position="141"/>
    </location>
    <ligand>
        <name>Fe(2+)</name>
        <dbReference type="ChEBI" id="CHEBI:29033"/>
    </ligand>
</feature>
<feature type="binding site" evidence="1">
    <location>
        <position position="141"/>
    </location>
    <ligand>
        <name>Ni(2+)</name>
        <dbReference type="ChEBI" id="CHEBI:49786"/>
    </ligand>
</feature>
<feature type="site" description="May play a role in metal incorporation in vivo" evidence="1">
    <location>
        <position position="96"/>
    </location>
</feature>
<feature type="site" description="May play a role in transmitting local conformational changes" evidence="1">
    <location>
        <position position="102"/>
    </location>
</feature>
<feature type="site" description="Important to generate the dianion" evidence="1">
    <location>
        <position position="105"/>
    </location>
</feature>
<protein>
    <recommendedName>
        <fullName evidence="1">Acireductone dioxygenase</fullName>
    </recommendedName>
    <alternativeName>
        <fullName evidence="1">1,2-dihydroxy-3-keto-5-methylthiopentene dioxygenase</fullName>
        <shortName evidence="1">DHK-MTPene dioxygenase</shortName>
    </alternativeName>
    <alternativeName>
        <fullName evidence="1">Acireductone dioxygenase (Fe(2+)-requiring)</fullName>
        <shortName evidence="1">ARD'</shortName>
        <shortName evidence="1">Fe-ARD</shortName>
        <ecNumber evidence="1">1.13.11.54</ecNumber>
    </alternativeName>
    <alternativeName>
        <fullName evidence="1">Acireductone dioxygenase (Ni(2+)-requiring)</fullName>
        <shortName evidence="1">ARD</shortName>
        <shortName evidence="1">Ni-ARD</shortName>
        <ecNumber evidence="1">1.13.11.53</ecNumber>
    </alternativeName>
</protein>
<comment type="function">
    <text evidence="1">Catalyzes 2 different reactions between oxygen and the acireductone 1,2-dihydroxy-3-keto-5-methylthiopentene (DHK-MTPene) depending upon the metal bound in the active site. Fe-containing acireductone dioxygenase (Fe-ARD) produces formate and 2-keto-4-methylthiobutyrate (KMTB), the alpha-ketoacid precursor of methionine in the methionine recycle pathway. Ni-containing acireductone dioxygenase (Ni-ARD) produces methylthiopropionate, carbon monoxide and formate, and does not lie on the methionine recycle pathway.</text>
</comment>
<comment type="catalytic activity">
    <reaction evidence="1">
        <text>1,2-dihydroxy-5-(methylsulfanyl)pent-1-en-3-one + O2 = 3-(methylsulfanyl)propanoate + CO + formate + 2 H(+)</text>
        <dbReference type="Rhea" id="RHEA:14161"/>
        <dbReference type="ChEBI" id="CHEBI:15378"/>
        <dbReference type="ChEBI" id="CHEBI:15379"/>
        <dbReference type="ChEBI" id="CHEBI:15740"/>
        <dbReference type="ChEBI" id="CHEBI:17245"/>
        <dbReference type="ChEBI" id="CHEBI:49016"/>
        <dbReference type="ChEBI" id="CHEBI:49252"/>
        <dbReference type="EC" id="1.13.11.53"/>
    </reaction>
</comment>
<comment type="catalytic activity">
    <reaction evidence="1">
        <text>1,2-dihydroxy-5-(methylsulfanyl)pent-1-en-3-one + O2 = 4-methylsulfanyl-2-oxobutanoate + formate + 2 H(+)</text>
        <dbReference type="Rhea" id="RHEA:24504"/>
        <dbReference type="ChEBI" id="CHEBI:15378"/>
        <dbReference type="ChEBI" id="CHEBI:15379"/>
        <dbReference type="ChEBI" id="CHEBI:15740"/>
        <dbReference type="ChEBI" id="CHEBI:16723"/>
        <dbReference type="ChEBI" id="CHEBI:49252"/>
        <dbReference type="EC" id="1.13.11.54"/>
    </reaction>
</comment>
<comment type="cofactor">
    <cofactor evidence="1">
        <name>Fe(2+)</name>
        <dbReference type="ChEBI" id="CHEBI:29033"/>
    </cofactor>
    <text evidence="1">Binds 1 Fe(2+) cation per monomer.</text>
</comment>
<comment type="cofactor">
    <cofactor evidence="1">
        <name>Ni(2+)</name>
        <dbReference type="ChEBI" id="CHEBI:49786"/>
    </cofactor>
    <text evidence="1">Binds 1 nickel ion per monomer.</text>
</comment>
<comment type="pathway">
    <text evidence="1">Amino-acid biosynthesis; L-methionine biosynthesis via salvage pathway; L-methionine from S-methyl-5-thio-alpha-D-ribose 1-phosphate: step 5/6.</text>
</comment>
<comment type="subunit">
    <text evidence="1">Monomer.</text>
</comment>
<comment type="similarity">
    <text evidence="1">Belongs to the acireductone dioxygenase (ARD) family.</text>
</comment>
<organism>
    <name type="scientific">Pseudomonas fluorescens (strain ATCC BAA-477 / NRRL B-23932 / Pf-5)</name>
    <dbReference type="NCBI Taxonomy" id="220664"/>
    <lineage>
        <taxon>Bacteria</taxon>
        <taxon>Pseudomonadati</taxon>
        <taxon>Pseudomonadota</taxon>
        <taxon>Gammaproteobacteria</taxon>
        <taxon>Pseudomonadales</taxon>
        <taxon>Pseudomonadaceae</taxon>
        <taxon>Pseudomonas</taxon>
    </lineage>
</organism>
<reference key="1">
    <citation type="journal article" date="2005" name="Nat. Biotechnol.">
        <title>Complete genome sequence of the plant commensal Pseudomonas fluorescens Pf-5.</title>
        <authorList>
            <person name="Paulsen I.T."/>
            <person name="Press C.M."/>
            <person name="Ravel J."/>
            <person name="Kobayashi D.Y."/>
            <person name="Myers G.S.A."/>
            <person name="Mavrodi D.V."/>
            <person name="DeBoy R.T."/>
            <person name="Seshadri R."/>
            <person name="Ren Q."/>
            <person name="Madupu R."/>
            <person name="Dodson R.J."/>
            <person name="Durkin A.S."/>
            <person name="Brinkac L.M."/>
            <person name="Daugherty S.C."/>
            <person name="Sullivan S.A."/>
            <person name="Rosovitz M.J."/>
            <person name="Gwinn M.L."/>
            <person name="Zhou L."/>
            <person name="Schneider D.J."/>
            <person name="Cartinhour S.W."/>
            <person name="Nelson W.C."/>
            <person name="Weidman J."/>
            <person name="Watkins K."/>
            <person name="Tran K."/>
            <person name="Khouri H."/>
            <person name="Pierson E.A."/>
            <person name="Pierson L.S. III"/>
            <person name="Thomashow L.S."/>
            <person name="Loper J.E."/>
        </authorList>
    </citation>
    <scope>NUCLEOTIDE SEQUENCE [LARGE SCALE GENOMIC DNA]</scope>
    <source>
        <strain>ATCC BAA-477 / NRRL B-23932 / Pf-5</strain>
    </source>
</reference>
<name>MTND_PSEF5</name>
<keyword id="KW-0028">Amino-acid biosynthesis</keyword>
<keyword id="KW-0223">Dioxygenase</keyword>
<keyword id="KW-0408">Iron</keyword>
<keyword id="KW-0479">Metal-binding</keyword>
<keyword id="KW-0486">Methionine biosynthesis</keyword>
<keyword id="KW-0533">Nickel</keyword>
<keyword id="KW-0560">Oxidoreductase</keyword>
<dbReference type="EC" id="1.13.11.54" evidence="1"/>
<dbReference type="EC" id="1.13.11.53" evidence="1"/>
<dbReference type="EMBL" id="CP000076">
    <property type="protein sequence ID" value="AAY93601.1"/>
    <property type="molecule type" value="Genomic_DNA"/>
</dbReference>
<dbReference type="RefSeq" id="WP_011062616.1">
    <property type="nucleotide sequence ID" value="NC_004129.6"/>
</dbReference>
<dbReference type="SMR" id="Q4K8J5"/>
<dbReference type="STRING" id="220664.PFL_4346"/>
<dbReference type="KEGG" id="pfl:PFL_4346"/>
<dbReference type="PATRIC" id="fig|220664.5.peg.4453"/>
<dbReference type="eggNOG" id="COG1791">
    <property type="taxonomic scope" value="Bacteria"/>
</dbReference>
<dbReference type="HOGENOM" id="CLU_125400_0_0_6"/>
<dbReference type="UniPathway" id="UPA00904">
    <property type="reaction ID" value="UER00878"/>
</dbReference>
<dbReference type="Proteomes" id="UP000008540">
    <property type="component" value="Chromosome"/>
</dbReference>
<dbReference type="GO" id="GO:0010308">
    <property type="term" value="F:acireductone dioxygenase (Ni2+-requiring) activity"/>
    <property type="evidence" value="ECO:0007669"/>
    <property type="project" value="UniProtKB-UniRule"/>
</dbReference>
<dbReference type="GO" id="GO:0010309">
    <property type="term" value="F:acireductone dioxygenase [iron(II)-requiring] activity"/>
    <property type="evidence" value="ECO:0007669"/>
    <property type="project" value="UniProtKB-UniRule"/>
</dbReference>
<dbReference type="GO" id="GO:0005506">
    <property type="term" value="F:iron ion binding"/>
    <property type="evidence" value="ECO:0007669"/>
    <property type="project" value="UniProtKB-UniRule"/>
</dbReference>
<dbReference type="GO" id="GO:0016151">
    <property type="term" value="F:nickel cation binding"/>
    <property type="evidence" value="ECO:0007669"/>
    <property type="project" value="UniProtKB-UniRule"/>
</dbReference>
<dbReference type="GO" id="GO:0019509">
    <property type="term" value="P:L-methionine salvage from methylthioadenosine"/>
    <property type="evidence" value="ECO:0007669"/>
    <property type="project" value="UniProtKB-UniRule"/>
</dbReference>
<dbReference type="GO" id="GO:0019284">
    <property type="term" value="P:L-methionine salvage from S-adenosylmethionine"/>
    <property type="evidence" value="ECO:0007669"/>
    <property type="project" value="InterPro"/>
</dbReference>
<dbReference type="CDD" id="cd02232">
    <property type="entry name" value="cupin_ARD"/>
    <property type="match status" value="1"/>
</dbReference>
<dbReference type="Gene3D" id="2.60.120.10">
    <property type="entry name" value="Jelly Rolls"/>
    <property type="match status" value="1"/>
</dbReference>
<dbReference type="HAMAP" id="MF_01682">
    <property type="entry name" value="Salvage_MtnD"/>
    <property type="match status" value="1"/>
</dbReference>
<dbReference type="InterPro" id="IPR004313">
    <property type="entry name" value="ARD"/>
</dbReference>
<dbReference type="InterPro" id="IPR023956">
    <property type="entry name" value="ARD_bac"/>
</dbReference>
<dbReference type="InterPro" id="IPR014710">
    <property type="entry name" value="RmlC-like_jellyroll"/>
</dbReference>
<dbReference type="InterPro" id="IPR011051">
    <property type="entry name" value="RmlC_Cupin_sf"/>
</dbReference>
<dbReference type="PANTHER" id="PTHR23418">
    <property type="entry name" value="ACIREDUCTONE DIOXYGENASE"/>
    <property type="match status" value="1"/>
</dbReference>
<dbReference type="PANTHER" id="PTHR23418:SF0">
    <property type="entry name" value="ACIREDUCTONE DIOXYGENASE"/>
    <property type="match status" value="1"/>
</dbReference>
<dbReference type="Pfam" id="PF03079">
    <property type="entry name" value="ARD"/>
    <property type="match status" value="1"/>
</dbReference>
<dbReference type="SUPFAM" id="SSF51182">
    <property type="entry name" value="RmlC-like cupins"/>
    <property type="match status" value="1"/>
</dbReference>